<protein>
    <recommendedName>
        <fullName>Non-muscle caldesmon</fullName>
        <shortName>CDM</shortName>
    </recommendedName>
    <alternativeName>
        <fullName>L-caldesmon</fullName>
    </alternativeName>
</protein>
<comment type="function">
    <text>Actin- and myosin-binding protein implicated in the regulation of actomyosin interactions in smooth muscle and nonmuscle cells (could act as a bridge between myosin and actin filaments). Stimulates actin binding of tropomyosin which increases the stabilization of actin filament structure. In muscle tissues, inhibits the actomyosin ATPase by binding to F-actin. This inhibition is attenuated by calcium-calmodulin and is potentiated by tropomyosin. Interacts with actin, myosin, two molecules of tropomyosin and with calmodulin. Also plays an essential role during cellular mitosis and receptor capping.</text>
</comment>
<comment type="subcellular location">
    <subcellularLocation>
        <location evidence="2">Cytoplasm</location>
        <location evidence="2">Cytoskeleton</location>
    </subcellularLocation>
    <subcellularLocation>
        <location evidence="2">Cytoplasm</location>
        <location evidence="2">Myofibril</location>
    </subcellularLocation>
    <subcellularLocation>
        <location evidence="2">Cytoplasm</location>
        <location evidence="2">Cytoskeleton</location>
        <location evidence="2">Stress fiber</location>
    </subcellularLocation>
    <text evidence="2">On thin filaments in smooth muscle and on stress fibers in fibroblasts (nonmuscle).</text>
</comment>
<comment type="domain">
    <text>The N-terminal part seems to be a myosin/calmodulin-binding domain, and the C-terminal a tropomyosin/actin/calmodulin-binding domain. These two domains are separated by a central helical region in the smooth-muscle form.</text>
</comment>
<comment type="PTM">
    <text evidence="1">In non-muscle cells, phosphorylation by CDC2 during mitosis causes caldesmon to dissociate from microfilaments. Phosphorylation reduces caldesmon binding to actin, myosin, and calmodulin as well as its inhibition of actomyosin ATPase activity. Phosphorylation also occurs in both quiescent and dividing smooth muscle cells with similar effects on the interaction with actin and calmodulin and on microfilaments reorganization (By similarity).</text>
</comment>
<name>CALD1_BOVIN</name>
<reference key="1">
    <citation type="journal article" date="1994" name="Proc. Natl. Acad. Sci. U.S.A.">
        <title>Identification of multiple genes in bovine retinal pericytes altered by exposure to elevated levels of glucose by using mRNA differential display.</title>
        <authorList>
            <person name="Aiello L.P."/>
            <person name="Robinson G.S."/>
            <person name="Lin Y.-W."/>
            <person name="Nishio Y."/>
            <person name="King G.L."/>
        </authorList>
    </citation>
    <scope>NUCLEOTIDE SEQUENCE [MRNA]</scope>
    <source>
        <tissue>Retina</tissue>
    </source>
</reference>
<keyword id="KW-0009">Actin-binding</keyword>
<keyword id="KW-0112">Calmodulin-binding</keyword>
<keyword id="KW-0963">Cytoplasm</keyword>
<keyword id="KW-0206">Cytoskeleton</keyword>
<keyword id="KW-0514">Muscle protein</keyword>
<keyword id="KW-0597">Phosphoprotein</keyword>
<keyword id="KW-1185">Reference proteome</keyword>
<accession>Q27976</accession>
<feature type="chain" id="PRO_0000089286" description="Non-muscle caldesmon">
    <location>
        <begin position="1" status="less than"/>
        <end position="83" status="greater than"/>
    </location>
</feature>
<feature type="region of interest" description="Myosin and calmodulin-binding" evidence="1">
    <location>
        <begin position="1" status="less than"/>
        <end position="63"/>
    </location>
</feature>
<feature type="region of interest" description="Disordered" evidence="3">
    <location>
        <begin position="1"/>
        <end position="83"/>
    </location>
</feature>
<feature type="compositionally biased region" description="Basic and acidic residues" evidence="3">
    <location>
        <begin position="1"/>
        <end position="44"/>
    </location>
</feature>
<feature type="compositionally biased region" description="Basic and acidic residues" evidence="3">
    <location>
        <begin position="62"/>
        <end position="76"/>
    </location>
</feature>
<feature type="non-terminal residue">
    <location>
        <position position="1"/>
    </location>
</feature>
<feature type="non-terminal residue">
    <location>
        <position position="83"/>
    </location>
</feature>
<proteinExistence type="evidence at transcript level"/>
<organism>
    <name type="scientific">Bos taurus</name>
    <name type="common">Bovine</name>
    <dbReference type="NCBI Taxonomy" id="9913"/>
    <lineage>
        <taxon>Eukaryota</taxon>
        <taxon>Metazoa</taxon>
        <taxon>Chordata</taxon>
        <taxon>Craniata</taxon>
        <taxon>Vertebrata</taxon>
        <taxon>Euteleostomi</taxon>
        <taxon>Mammalia</taxon>
        <taxon>Eutheria</taxon>
        <taxon>Laurasiatheria</taxon>
        <taxon>Artiodactyla</taxon>
        <taxon>Ruminantia</taxon>
        <taxon>Pecora</taxon>
        <taxon>Bovidae</taxon>
        <taxon>Bovinae</taxon>
        <taxon>Bos</taxon>
    </lineage>
</organism>
<dbReference type="EMBL" id="U09956">
    <property type="protein sequence ID" value="AAA21602.1"/>
    <property type="molecule type" value="mRNA"/>
</dbReference>
<dbReference type="PIR" id="I46058">
    <property type="entry name" value="I46058"/>
</dbReference>
<dbReference type="STRING" id="9913.ENSBTAP00000058613"/>
<dbReference type="PaxDb" id="9913-ENSBTAP00000018566"/>
<dbReference type="eggNOG" id="ENOG502QSYB">
    <property type="taxonomic scope" value="Eukaryota"/>
</dbReference>
<dbReference type="InParanoid" id="Q27976"/>
<dbReference type="OrthoDB" id="9908857at2759"/>
<dbReference type="Proteomes" id="UP000009136">
    <property type="component" value="Unplaced"/>
</dbReference>
<dbReference type="GO" id="GO:0030016">
    <property type="term" value="C:myofibril"/>
    <property type="evidence" value="ECO:0007669"/>
    <property type="project" value="UniProtKB-SubCell"/>
</dbReference>
<dbReference type="GO" id="GO:0001725">
    <property type="term" value="C:stress fiber"/>
    <property type="evidence" value="ECO:0007669"/>
    <property type="project" value="UniProtKB-SubCell"/>
</dbReference>
<dbReference type="GO" id="GO:0003779">
    <property type="term" value="F:actin binding"/>
    <property type="evidence" value="ECO:0007669"/>
    <property type="project" value="UniProtKB-KW"/>
</dbReference>
<dbReference type="GO" id="GO:0005516">
    <property type="term" value="F:calmodulin binding"/>
    <property type="evidence" value="ECO:0007669"/>
    <property type="project" value="UniProtKB-KW"/>
</dbReference>
<gene>
    <name type="primary">CALD1</name>
</gene>
<evidence type="ECO:0000250" key="1"/>
<evidence type="ECO:0000250" key="2">
    <source>
        <dbReference type="UniProtKB" id="P13505"/>
    </source>
</evidence>
<evidence type="ECO:0000256" key="3">
    <source>
        <dbReference type="SAM" id="MobiDB-lite"/>
    </source>
</evidence>
<sequence>QTSEKEGRSESRQERQELEETEIVTKSHQKNDWMEAEEKKKEEKEKEEEEEEKPKPGSIEENQLKDEKTKKDKESKNILSLCL</sequence>